<organism>
    <name type="scientific">Thermostichus vulcanus</name>
    <name type="common">Synechococcus vulcanus</name>
    <dbReference type="NCBI Taxonomy" id="32053"/>
    <lineage>
        <taxon>Bacteria</taxon>
        <taxon>Bacillati</taxon>
        <taxon>Cyanobacteriota</taxon>
        <taxon>Cyanophyceae</taxon>
        <taxon>Thermostichales</taxon>
        <taxon>Thermostichaceae</taxon>
        <taxon>Thermostichus</taxon>
    </lineage>
</organism>
<gene>
    <name evidence="1" type="primary">psbE</name>
</gene>
<evidence type="ECO:0000255" key="1">
    <source>
        <dbReference type="HAMAP-Rule" id="MF_00642"/>
    </source>
</evidence>
<evidence type="ECO:0000269" key="2">
    <source>
    </source>
</evidence>
<evidence type="ECO:0000269" key="3">
    <source>
    </source>
</evidence>
<evidence type="ECO:0000269" key="4">
    <source>
    </source>
</evidence>
<evidence type="ECO:0000269" key="5">
    <source>
    </source>
</evidence>
<evidence type="ECO:0000269" key="6">
    <source>
    </source>
</evidence>
<evidence type="ECO:0000269" key="7">
    <source ref="2"/>
</evidence>
<evidence type="ECO:0000303" key="8">
    <source>
    </source>
</evidence>
<evidence type="ECO:0007829" key="9">
    <source>
        <dbReference type="PDB" id="5B5E"/>
    </source>
</evidence>
<evidence type="ECO:0007829" key="10">
    <source>
        <dbReference type="PDB" id="5B66"/>
    </source>
</evidence>
<feature type="initiator methionine" description="Removed" evidence="2 7">
    <location>
        <position position="1"/>
    </location>
</feature>
<feature type="chain" id="PRO_0000200346" description="Cytochrome b559 subunit alpha">
    <location>
        <begin position="2"/>
        <end position="84"/>
    </location>
</feature>
<feature type="topological domain" description="Cytoplasmic" evidence="5">
    <location>
        <begin position="2"/>
        <end position="20"/>
    </location>
</feature>
<feature type="transmembrane region" description="Helical" evidence="1 5">
    <location>
        <begin position="21"/>
        <end position="35"/>
    </location>
</feature>
<feature type="topological domain" description="Lumenal" evidence="1 5">
    <location>
        <begin position="36"/>
        <end position="84"/>
    </location>
</feature>
<feature type="binding site" description="axial binding residue" evidence="1 5 6 8">
    <location>
        <position position="23"/>
    </location>
    <ligand>
        <name>heme</name>
        <dbReference type="ChEBI" id="CHEBI:30413"/>
        <note>ligand shared with beta subunit</note>
    </ligand>
    <ligandPart>
        <name>Fe</name>
        <dbReference type="ChEBI" id="CHEBI:18248"/>
    </ligandPart>
</feature>
<feature type="helix" evidence="10">
    <location>
        <begin position="10"/>
        <end position="14"/>
    </location>
</feature>
<feature type="helix" evidence="10">
    <location>
        <begin position="17"/>
        <end position="39"/>
    </location>
</feature>
<feature type="helix" evidence="10">
    <location>
        <begin position="42"/>
        <end position="47"/>
    </location>
</feature>
<feature type="strand" evidence="10">
    <location>
        <begin position="54"/>
        <end position="56"/>
    </location>
</feature>
<feature type="turn" evidence="9">
    <location>
        <begin position="69"/>
        <end position="71"/>
    </location>
</feature>
<feature type="helix" evidence="10">
    <location>
        <begin position="72"/>
        <end position="80"/>
    </location>
</feature>
<proteinExistence type="evidence at protein level"/>
<protein>
    <recommendedName>
        <fullName evidence="1">Cytochrome b559 subunit alpha</fullName>
    </recommendedName>
    <alternativeName>
        <fullName evidence="1">PSII reaction center subunit V</fullName>
    </alternativeName>
</protein>
<comment type="function">
    <text evidence="1 4 6">This b-type cytochrome is tightly associated with the reaction center of photosystem II (PSII). PSII is a light-driven water:plastoquinone oxidoreductase that uses light energy to abstract electrons from H(2)O, generating O(2) and a proton gradient subsequently used for ATP formation. It consists of a core antenna complex that captures photons, and an electron transfer chain that converts photonic excitation into a charge separation.</text>
</comment>
<comment type="cofactor">
    <cofactor evidence="1 3 4 5 6">
        <name>heme b</name>
        <dbReference type="ChEBI" id="CHEBI:60344"/>
    </cofactor>
    <text evidence="1 3 4 5 6">With its partner (PsbF) binds heme. PSII binds additional chlorophylls, carotenoids and specific lipids.</text>
</comment>
<comment type="subunit">
    <text evidence="1 2 3 4 5 6">Heterodimer of an alpha subunit and a beta subunit. PSII is composed of 1 copy each of membrane proteins PsbA, PsbB, PsbC, PsbD, PsbE, PsbF, PsbH, PsbI, PsbJ, PsbK, PsbL, PsbM, PsbT, PsbX, PsbY, PsbZ, Psb30/Ycf12, peripheral proteins PsbO, CyanoQ (PsbQ), PsbU, PsbV and a large number of cofactors. It forms dimeric complexes.</text>
</comment>
<comment type="subcellular location">
    <subcellularLocation>
        <location evidence="1 3 4 5 6">Cellular thylakoid membrane</location>
        <topology evidence="1 3 4 5 6">Single-pass membrane protein</topology>
    </subcellularLocation>
</comment>
<comment type="similarity">
    <text evidence="1">Belongs to the PsbE/PsbF family.</text>
</comment>
<accession>P12238</accession>
<accession>Q8GI50</accession>
<reference key="1">
    <citation type="journal article" date="2002" name="Plant Cell Physiol.">
        <title>Low-molecular-mass polypeptide components of a photosystem II preparation from the thermophilic cyanobacterium Thermosynechococcus vulcanus.</title>
        <authorList>
            <person name="Kashino Y."/>
            <person name="Koike H."/>
            <person name="Yoshio M."/>
            <person name="Egashira H."/>
            <person name="Ikeuchi M."/>
            <person name="Pakrasi H.B."/>
            <person name="Satoh K."/>
        </authorList>
    </citation>
    <scope>NUCLEOTIDE SEQUENCE [GENOMIC DNA]</scope>
    <scope>PROTEIN SEQUENCE OF 2-8 AND 74-84</scope>
    <scope>COMPOSITION OF PHOTOSYSTEM II</scope>
    <scope>SUBUNIT</scope>
</reference>
<reference key="2">
    <citation type="journal article" date="1989" name="FEBS Lett.">
        <title>Identification of psbI and psbL gene products in cyanobacterial photosystem II reaction center preparation.</title>
        <authorList>
            <person name="Ikeuchi M."/>
            <person name="Koike H."/>
            <person name="Inoue Y."/>
        </authorList>
    </citation>
    <scope>PROTEIN SEQUENCE OF 2-34</scope>
</reference>
<reference key="3">
    <citation type="journal article" date="2003" name="Proc. Natl. Acad. Sci. U.S.A.">
        <title>Crystal structure of oxygen-evolving photosystem II from Thermosynechococcus vulcanus at 3.7-A resolution.</title>
        <authorList>
            <person name="Kamiya N."/>
            <person name="Shen J.-R."/>
        </authorList>
    </citation>
    <scope>X-RAY CRYSTALLOGRAPHY (3.7 ANGSTROMS) OF 2-84 IN PHOTOSYSTEM II</scope>
    <scope>COFACTOR</scope>
    <scope>SUBUNIT</scope>
    <scope>SUBCELLULAR LOCATION</scope>
</reference>
<reference key="4">
    <citation type="journal article" date="2009" name="Proc. Natl. Acad. Sci. U.S.A.">
        <title>Location of chloride and its possible functions in oxygen-evolving photosystem II revealed by X-ray crystallography.</title>
        <authorList>
            <person name="Kawakami K."/>
            <person name="Umena Y."/>
            <person name="Kamiya N."/>
            <person name="Shen J.R."/>
        </authorList>
    </citation>
    <scope>X-RAY CRYSTALLOGRAPHY (3.7 ANGSTROMS) OF 3-84 IN PHOTOSYSTEM II</scope>
    <scope>FUNCTION</scope>
    <scope>COFACTOR</scope>
    <scope>SUBUNIT</scope>
    <scope>SUBCELLULAR LOCATION</scope>
</reference>
<reference key="5">
    <citation type="journal article" date="2011" name="Nature">
        <title>Crystal structure of oxygen-evolving photosystem II at a resolution of 1.9 A.</title>
        <authorList>
            <person name="Umena Y."/>
            <person name="Kawakami K."/>
            <person name="Shen J.R."/>
            <person name="Kamiya N."/>
        </authorList>
    </citation>
    <scope>X-RAY CRYSTALLOGRAPHY (1.9 ANGSTROMS) OF 2-84 IN COMPLEX WITH HEME IN PHOTOSYSTEM II</scope>
    <scope>COFACTOR</scope>
    <scope>SUBUNIT</scope>
    <scope>SUBCELLULAR LOCATION</scope>
    <scope>TOPOLOGY</scope>
</reference>
<reference key="6">
    <citation type="journal article" date="2013" name="Proc. Natl. Acad. Sci. U.S.A.">
        <title>Structure of Sr-substituted photosystem II at 2.1 A resolution and its implications in the mechanism of water oxidation.</title>
        <authorList>
            <person name="Koua F.H."/>
            <person name="Umena Y."/>
            <person name="Kawakami K."/>
            <person name="Shen J.R."/>
        </authorList>
    </citation>
    <scope>X-RAY CRYSTALLOGRAPHY (2.1 ANGSTROMS) OF 4-83 IN PHOTOSYSTEM II</scope>
    <scope>FUNCTION</scope>
    <scope>COFACTOR</scope>
    <scope>SUBUNIT</scope>
    <scope>SUBCELLULAR LOCATION</scope>
</reference>
<keyword id="KW-0002">3D-structure</keyword>
<keyword id="KW-0903">Direct protein sequencing</keyword>
<keyword id="KW-0249">Electron transport</keyword>
<keyword id="KW-0349">Heme</keyword>
<keyword id="KW-0408">Iron</keyword>
<keyword id="KW-0472">Membrane</keyword>
<keyword id="KW-0479">Metal-binding</keyword>
<keyword id="KW-0602">Photosynthesis</keyword>
<keyword id="KW-0604">Photosystem II</keyword>
<keyword id="KW-0793">Thylakoid</keyword>
<keyword id="KW-0812">Transmembrane</keyword>
<keyword id="KW-1133">Transmembrane helix</keyword>
<keyword id="KW-0813">Transport</keyword>
<sequence>MAGTTGERPFSDIITSVRYWVIHSITIPALFIAGWLFVSTGLAYDVFGTPRPDSYYAQEQRSIPLVTDRFEAKQQVETFLEQLK</sequence>
<dbReference type="EMBL" id="AB086860">
    <property type="protein sequence ID" value="BAC53634.1"/>
    <property type="molecule type" value="Genomic_DNA"/>
</dbReference>
<dbReference type="PIR" id="S05030">
    <property type="entry name" value="S05030"/>
</dbReference>
<dbReference type="PDB" id="1IZL">
    <property type="method" value="X-ray"/>
    <property type="resolution" value="3.70 A"/>
    <property type="chains" value="E/P=2-84"/>
</dbReference>
<dbReference type="PDB" id="3A0B">
    <property type="method" value="X-ray"/>
    <property type="resolution" value="3.70 A"/>
    <property type="chains" value="E/e=3-84"/>
</dbReference>
<dbReference type="PDB" id="3A0H">
    <property type="method" value="X-ray"/>
    <property type="resolution" value="4.00 A"/>
    <property type="chains" value="E/e=3-84"/>
</dbReference>
<dbReference type="PDB" id="3WU2">
    <property type="method" value="X-ray"/>
    <property type="resolution" value="1.90 A"/>
    <property type="chains" value="E/e=2-84"/>
</dbReference>
<dbReference type="PDB" id="4IL6">
    <property type="method" value="X-ray"/>
    <property type="resolution" value="2.10 A"/>
    <property type="chains" value="E/e=4-83"/>
</dbReference>
<dbReference type="PDB" id="4UB6">
    <property type="method" value="X-ray"/>
    <property type="resolution" value="1.95 A"/>
    <property type="chains" value="E/e=1-84"/>
</dbReference>
<dbReference type="PDB" id="4UB8">
    <property type="method" value="X-ray"/>
    <property type="resolution" value="1.95 A"/>
    <property type="chains" value="E/e=1-84"/>
</dbReference>
<dbReference type="PDB" id="5B5E">
    <property type="method" value="X-ray"/>
    <property type="resolution" value="1.87 A"/>
    <property type="chains" value="E/e=2-84"/>
</dbReference>
<dbReference type="PDB" id="5B66">
    <property type="method" value="X-ray"/>
    <property type="resolution" value="1.85 A"/>
    <property type="chains" value="E/e=2-84"/>
</dbReference>
<dbReference type="PDB" id="5GTH">
    <property type="method" value="X-ray"/>
    <property type="resolution" value="2.50 A"/>
    <property type="chains" value="E/e=1-84"/>
</dbReference>
<dbReference type="PDB" id="5GTI">
    <property type="method" value="X-ray"/>
    <property type="resolution" value="2.50 A"/>
    <property type="chains" value="E/e=1-84"/>
</dbReference>
<dbReference type="PDB" id="5V2C">
    <property type="method" value="X-ray"/>
    <property type="resolution" value="1.90 A"/>
    <property type="chains" value="E/e=2-84"/>
</dbReference>
<dbReference type="PDB" id="5WS5">
    <property type="method" value="X-ray"/>
    <property type="resolution" value="2.35 A"/>
    <property type="chains" value="E/e=1-84"/>
</dbReference>
<dbReference type="PDB" id="5WS6">
    <property type="method" value="X-ray"/>
    <property type="resolution" value="2.35 A"/>
    <property type="chains" value="E/e=1-84"/>
</dbReference>
<dbReference type="PDB" id="6JLJ">
    <property type="method" value="X-ray"/>
    <property type="resolution" value="2.15 A"/>
    <property type="chains" value="E/e=1-84"/>
</dbReference>
<dbReference type="PDB" id="6JLK">
    <property type="method" value="X-ray"/>
    <property type="resolution" value="2.15 A"/>
    <property type="chains" value="E/e=1-84"/>
</dbReference>
<dbReference type="PDB" id="6JLL">
    <property type="method" value="X-ray"/>
    <property type="resolution" value="2.15 A"/>
    <property type="chains" value="E/e=1-84"/>
</dbReference>
<dbReference type="PDB" id="6JLM">
    <property type="method" value="X-ray"/>
    <property type="resolution" value="2.35 A"/>
    <property type="chains" value="E/e=1-84"/>
</dbReference>
<dbReference type="PDB" id="6JLN">
    <property type="method" value="X-ray"/>
    <property type="resolution" value="2.40 A"/>
    <property type="chains" value="E/e=1-84"/>
</dbReference>
<dbReference type="PDB" id="6JLO">
    <property type="method" value="X-ray"/>
    <property type="resolution" value="2.40 A"/>
    <property type="chains" value="E/e=1-84"/>
</dbReference>
<dbReference type="PDB" id="6JLP">
    <property type="method" value="X-ray"/>
    <property type="resolution" value="2.50 A"/>
    <property type="chains" value="E/e=1-84"/>
</dbReference>
<dbReference type="PDB" id="7CJI">
    <property type="method" value="X-ray"/>
    <property type="resolution" value="2.35 A"/>
    <property type="chains" value="E/e=1-84"/>
</dbReference>
<dbReference type="PDB" id="7CJJ">
    <property type="method" value="X-ray"/>
    <property type="resolution" value="2.40 A"/>
    <property type="chains" value="E/e=1-84"/>
</dbReference>
<dbReference type="PDB" id="7COU">
    <property type="method" value="X-ray"/>
    <property type="resolution" value="2.25 A"/>
    <property type="chains" value="E/e=1-84"/>
</dbReference>
<dbReference type="PDB" id="7CZL">
    <property type="method" value="EM"/>
    <property type="resolution" value="3.78 A"/>
    <property type="chains" value="E/e=20-84"/>
</dbReference>
<dbReference type="PDB" id="7D1T">
    <property type="method" value="EM"/>
    <property type="resolution" value="1.95 A"/>
    <property type="chains" value="E/e=4-84"/>
</dbReference>
<dbReference type="PDB" id="7D1U">
    <property type="method" value="EM"/>
    <property type="resolution" value="2.08 A"/>
    <property type="chains" value="E/e=4-84"/>
</dbReference>
<dbReference type="PDB" id="7DXA">
    <property type="method" value="EM"/>
    <property type="resolution" value="3.14 A"/>
    <property type="chains" value="e=1-84"/>
</dbReference>
<dbReference type="PDB" id="7DXH">
    <property type="method" value="EM"/>
    <property type="resolution" value="3.14 A"/>
    <property type="chains" value="e=1-84"/>
</dbReference>
<dbReference type="PDB" id="7EDA">
    <property type="method" value="EM"/>
    <property type="resolution" value="2.78 A"/>
    <property type="chains" value="E=1-84"/>
</dbReference>
<dbReference type="PDB" id="8GN0">
    <property type="method" value="X-ray"/>
    <property type="resolution" value="2.15 A"/>
    <property type="chains" value="E/e=2-84"/>
</dbReference>
<dbReference type="PDB" id="8GN1">
    <property type="method" value="X-ray"/>
    <property type="resolution" value="2.10 A"/>
    <property type="chains" value="E/e=2-84"/>
</dbReference>
<dbReference type="PDB" id="8GN2">
    <property type="method" value="X-ray"/>
    <property type="resolution" value="1.95 A"/>
    <property type="chains" value="E/e=2-84"/>
</dbReference>
<dbReference type="PDB" id="8IR5">
    <property type="method" value="X-ray"/>
    <property type="resolution" value="2.15 A"/>
    <property type="chains" value="E/e=1-84"/>
</dbReference>
<dbReference type="PDB" id="8IR6">
    <property type="method" value="X-ray"/>
    <property type="resolution" value="2.20 A"/>
    <property type="chains" value="E/e=1-84"/>
</dbReference>
<dbReference type="PDB" id="8IR7">
    <property type="method" value="X-ray"/>
    <property type="resolution" value="2.25 A"/>
    <property type="chains" value="E/e=1-84"/>
</dbReference>
<dbReference type="PDB" id="8IR8">
    <property type="method" value="X-ray"/>
    <property type="resolution" value="2.25 A"/>
    <property type="chains" value="E/e=1-84"/>
</dbReference>
<dbReference type="PDB" id="8IR9">
    <property type="method" value="X-ray"/>
    <property type="resolution" value="2.20 A"/>
    <property type="chains" value="E/e=1-84"/>
</dbReference>
<dbReference type="PDB" id="8IRA">
    <property type="method" value="X-ray"/>
    <property type="resolution" value="2.20 A"/>
    <property type="chains" value="E/e=1-84"/>
</dbReference>
<dbReference type="PDB" id="8IRB">
    <property type="method" value="X-ray"/>
    <property type="resolution" value="2.30 A"/>
    <property type="chains" value="E/e=1-84"/>
</dbReference>
<dbReference type="PDB" id="8IRC">
    <property type="method" value="X-ray"/>
    <property type="resolution" value="2.25 A"/>
    <property type="chains" value="E/e=1-84"/>
</dbReference>
<dbReference type="PDB" id="8IRD">
    <property type="method" value="X-ray"/>
    <property type="resolution" value="2.30 A"/>
    <property type="chains" value="E/e=1-84"/>
</dbReference>
<dbReference type="PDB" id="8IRE">
    <property type="method" value="X-ray"/>
    <property type="resolution" value="2.25 A"/>
    <property type="chains" value="E/e=1-84"/>
</dbReference>
<dbReference type="PDB" id="8IRF">
    <property type="method" value="X-ray"/>
    <property type="resolution" value="2.25 A"/>
    <property type="chains" value="E/e=1-84"/>
</dbReference>
<dbReference type="PDB" id="8IRG">
    <property type="method" value="X-ray"/>
    <property type="resolution" value="2.30 A"/>
    <property type="chains" value="E/e=1-84"/>
</dbReference>
<dbReference type="PDB" id="8IRH">
    <property type="method" value="X-ray"/>
    <property type="resolution" value="2.25 A"/>
    <property type="chains" value="E/e=1-84"/>
</dbReference>
<dbReference type="PDB" id="8IRI">
    <property type="method" value="X-ray"/>
    <property type="resolution" value="2.25 A"/>
    <property type="chains" value="E/e=1-84"/>
</dbReference>
<dbReference type="PDBsum" id="1IZL"/>
<dbReference type="PDBsum" id="3A0B"/>
<dbReference type="PDBsum" id="3A0H"/>
<dbReference type="PDBsum" id="3WU2"/>
<dbReference type="PDBsum" id="4IL6"/>
<dbReference type="PDBsum" id="4UB6"/>
<dbReference type="PDBsum" id="4UB8"/>
<dbReference type="PDBsum" id="5B5E"/>
<dbReference type="PDBsum" id="5B66"/>
<dbReference type="PDBsum" id="5GTH"/>
<dbReference type="PDBsum" id="5GTI"/>
<dbReference type="PDBsum" id="5V2C"/>
<dbReference type="PDBsum" id="5WS5"/>
<dbReference type="PDBsum" id="5WS6"/>
<dbReference type="PDBsum" id="6JLJ"/>
<dbReference type="PDBsum" id="6JLK"/>
<dbReference type="PDBsum" id="6JLL"/>
<dbReference type="PDBsum" id="6JLM"/>
<dbReference type="PDBsum" id="6JLN"/>
<dbReference type="PDBsum" id="6JLO"/>
<dbReference type="PDBsum" id="6JLP"/>
<dbReference type="PDBsum" id="7CJI"/>
<dbReference type="PDBsum" id="7CJJ"/>
<dbReference type="PDBsum" id="7COU"/>
<dbReference type="PDBsum" id="7CZL"/>
<dbReference type="PDBsum" id="7D1T"/>
<dbReference type="PDBsum" id="7D1U"/>
<dbReference type="PDBsum" id="7DXA"/>
<dbReference type="PDBsum" id="7DXH"/>
<dbReference type="PDBsum" id="7EDA"/>
<dbReference type="PDBsum" id="8GN0"/>
<dbReference type="PDBsum" id="8GN1"/>
<dbReference type="PDBsum" id="8GN2"/>
<dbReference type="PDBsum" id="8IR5"/>
<dbReference type="PDBsum" id="8IR6"/>
<dbReference type="PDBsum" id="8IR7"/>
<dbReference type="PDBsum" id="8IR8"/>
<dbReference type="PDBsum" id="8IR9"/>
<dbReference type="PDBsum" id="8IRA"/>
<dbReference type="PDBsum" id="8IRB"/>
<dbReference type="PDBsum" id="8IRC"/>
<dbReference type="PDBsum" id="8IRD"/>
<dbReference type="PDBsum" id="8IRE"/>
<dbReference type="PDBsum" id="8IRF"/>
<dbReference type="PDBsum" id="8IRG"/>
<dbReference type="PDBsum" id="8IRH"/>
<dbReference type="PDBsum" id="8IRI"/>
<dbReference type="EMDB" id="EMD-30511"/>
<dbReference type="EMDB" id="EMD-30547"/>
<dbReference type="EMDB" id="EMD-30548"/>
<dbReference type="EMDB" id="EMD-30902"/>
<dbReference type="EMDB" id="EMD-30909"/>
<dbReference type="EMDB" id="EMD-31062"/>
<dbReference type="SMR" id="P12238"/>
<dbReference type="DIP" id="DIP-48862N"/>
<dbReference type="IntAct" id="P12238">
    <property type="interactions" value="1"/>
</dbReference>
<dbReference type="EvolutionaryTrace" id="P12238"/>
<dbReference type="GO" id="GO:0009539">
    <property type="term" value="C:photosystem II reaction center"/>
    <property type="evidence" value="ECO:0007669"/>
    <property type="project" value="InterPro"/>
</dbReference>
<dbReference type="GO" id="GO:0031676">
    <property type="term" value="C:plasma membrane-derived thylakoid membrane"/>
    <property type="evidence" value="ECO:0007669"/>
    <property type="project" value="UniProtKB-SubCell"/>
</dbReference>
<dbReference type="GO" id="GO:0009055">
    <property type="term" value="F:electron transfer activity"/>
    <property type="evidence" value="ECO:0007669"/>
    <property type="project" value="UniProtKB-UniRule"/>
</dbReference>
<dbReference type="GO" id="GO:0020037">
    <property type="term" value="F:heme binding"/>
    <property type="evidence" value="ECO:0007669"/>
    <property type="project" value="InterPro"/>
</dbReference>
<dbReference type="GO" id="GO:0005506">
    <property type="term" value="F:iron ion binding"/>
    <property type="evidence" value="ECO:0007669"/>
    <property type="project" value="UniProtKB-UniRule"/>
</dbReference>
<dbReference type="GO" id="GO:0009767">
    <property type="term" value="P:photosynthetic electron transport chain"/>
    <property type="evidence" value="ECO:0007669"/>
    <property type="project" value="InterPro"/>
</dbReference>
<dbReference type="Gene3D" id="1.20.5.860">
    <property type="entry name" value="Photosystem II cytochrome b559, alpha subunit"/>
    <property type="match status" value="1"/>
</dbReference>
<dbReference type="HAMAP" id="MF_00642">
    <property type="entry name" value="PSII_PsbE"/>
    <property type="match status" value="1"/>
</dbReference>
<dbReference type="InterPro" id="IPR006217">
    <property type="entry name" value="PSII_cyt_b559_asu"/>
</dbReference>
<dbReference type="InterPro" id="IPR037025">
    <property type="entry name" value="PSII_cyt_b559_asu_sf"/>
</dbReference>
<dbReference type="InterPro" id="IPR006216">
    <property type="entry name" value="PSII_cyt_b559_CS"/>
</dbReference>
<dbReference type="InterPro" id="IPR013081">
    <property type="entry name" value="PSII_cyt_b559_N"/>
</dbReference>
<dbReference type="InterPro" id="IPR013082">
    <property type="entry name" value="PSII_cytb559_asu_lum"/>
</dbReference>
<dbReference type="NCBIfam" id="TIGR01332">
    <property type="entry name" value="cyt_b559_alpha"/>
    <property type="match status" value="1"/>
</dbReference>
<dbReference type="PANTHER" id="PTHR33391">
    <property type="entry name" value="CYTOCHROME B559 SUBUNIT BETA-RELATED"/>
    <property type="match status" value="1"/>
</dbReference>
<dbReference type="PANTHER" id="PTHR33391:SF9">
    <property type="entry name" value="CYTOCHROME B559 SUBUNIT BETA-RELATED"/>
    <property type="match status" value="1"/>
</dbReference>
<dbReference type="Pfam" id="PF00283">
    <property type="entry name" value="Cytochrom_B559"/>
    <property type="match status" value="1"/>
</dbReference>
<dbReference type="Pfam" id="PF00284">
    <property type="entry name" value="Cytochrom_B559a"/>
    <property type="match status" value="1"/>
</dbReference>
<dbReference type="PIRSF" id="PIRSF000036">
    <property type="entry name" value="PsbE"/>
    <property type="match status" value="1"/>
</dbReference>
<dbReference type="SUPFAM" id="SSF161045">
    <property type="entry name" value="Cytochrome b559 subunits"/>
    <property type="match status" value="1"/>
</dbReference>
<dbReference type="PROSITE" id="PS00537">
    <property type="entry name" value="CYTOCHROME_B559"/>
    <property type="match status" value="1"/>
</dbReference>
<name>PSBE_THEVL</name>